<proteinExistence type="evidence at transcript level"/>
<dbReference type="EC" id="2.3.2.27" evidence="1"/>
<dbReference type="EC" id="2.3.2.32" evidence="1"/>
<dbReference type="EMBL" id="AY027936">
    <property type="protein sequence ID" value="AAK29182.1"/>
    <property type="status" value="ALT_INIT"/>
    <property type="molecule type" value="mRNA"/>
</dbReference>
<dbReference type="SMR" id="Q8QG64"/>
<dbReference type="STRING" id="8030.ENSSSAP00000005050"/>
<dbReference type="PaxDb" id="8030-ENSSSAP00000005050"/>
<dbReference type="Ensembl" id="ENSSSAT00070065622">
    <property type="protein sequence ID" value="ENSSSAP00070062906"/>
    <property type="gene ID" value="ENSSSAG00070040835"/>
</dbReference>
<dbReference type="Ensembl" id="ENSSSAT00070071386">
    <property type="protein sequence ID" value="ENSSSAP00070068279"/>
    <property type="gene ID" value="ENSSSAG00070044410"/>
</dbReference>
<dbReference type="GeneID" id="106601243"/>
<dbReference type="KEGG" id="sasa:106601243"/>
<dbReference type="OrthoDB" id="431646at7898"/>
<dbReference type="UniPathway" id="UPA00143"/>
<dbReference type="UniPathway" id="UPA00885"/>
<dbReference type="Proteomes" id="UP000087266">
    <property type="component" value="Chromosome ssa03"/>
</dbReference>
<dbReference type="Bgee" id="ENSSSAG00000002531">
    <property type="expression patterns" value="Expressed in pituitary gland and 23 other cell types or tissues"/>
</dbReference>
<dbReference type="GO" id="GO:0031463">
    <property type="term" value="C:Cul3-RING ubiquitin ligase complex"/>
    <property type="evidence" value="ECO:0000250"/>
    <property type="project" value="UniProtKB"/>
</dbReference>
<dbReference type="GO" id="GO:0031464">
    <property type="term" value="C:Cul4A-RING E3 ubiquitin ligase complex"/>
    <property type="evidence" value="ECO:0000250"/>
    <property type="project" value="UniProtKB"/>
</dbReference>
<dbReference type="GO" id="GO:0031465">
    <property type="term" value="C:Cul4B-RING E3 ubiquitin ligase complex"/>
    <property type="evidence" value="ECO:0000250"/>
    <property type="project" value="UniProtKB"/>
</dbReference>
<dbReference type="GO" id="GO:0031467">
    <property type="term" value="C:Cul7-RING ubiquitin ligase complex"/>
    <property type="evidence" value="ECO:0000250"/>
    <property type="project" value="UniProtKB"/>
</dbReference>
<dbReference type="GO" id="GO:0005737">
    <property type="term" value="C:cytoplasm"/>
    <property type="evidence" value="ECO:0007669"/>
    <property type="project" value="UniProtKB-SubCell"/>
</dbReference>
<dbReference type="GO" id="GO:0005634">
    <property type="term" value="C:nucleus"/>
    <property type="evidence" value="ECO:0007669"/>
    <property type="project" value="UniProtKB-SubCell"/>
</dbReference>
<dbReference type="GO" id="GO:0019005">
    <property type="term" value="C:SCF ubiquitin ligase complex"/>
    <property type="evidence" value="ECO:0000250"/>
    <property type="project" value="UniProtKB"/>
</dbReference>
<dbReference type="GO" id="GO:0061663">
    <property type="term" value="F:NEDD8 ligase activity"/>
    <property type="evidence" value="ECO:0000250"/>
    <property type="project" value="UniProtKB"/>
</dbReference>
<dbReference type="GO" id="GO:0004842">
    <property type="term" value="F:ubiquitin-protein transferase activity"/>
    <property type="evidence" value="ECO:0007669"/>
    <property type="project" value="UniProtKB-ARBA"/>
</dbReference>
<dbReference type="GO" id="GO:0008270">
    <property type="term" value="F:zinc ion binding"/>
    <property type="evidence" value="ECO:0007669"/>
    <property type="project" value="UniProtKB-KW"/>
</dbReference>
<dbReference type="GO" id="GO:0043161">
    <property type="term" value="P:proteasome-mediated ubiquitin-dependent protein catabolic process"/>
    <property type="evidence" value="ECO:0000250"/>
    <property type="project" value="UniProtKB"/>
</dbReference>
<dbReference type="GO" id="GO:0006513">
    <property type="term" value="P:protein monoubiquitination"/>
    <property type="evidence" value="ECO:0000250"/>
    <property type="project" value="UniProtKB"/>
</dbReference>
<dbReference type="GO" id="GO:0045116">
    <property type="term" value="P:protein neddylation"/>
    <property type="evidence" value="ECO:0000250"/>
    <property type="project" value="UniProtKB"/>
</dbReference>
<dbReference type="GO" id="GO:0016567">
    <property type="term" value="P:protein ubiquitination"/>
    <property type="evidence" value="ECO:0000250"/>
    <property type="project" value="UniProtKB"/>
</dbReference>
<dbReference type="GO" id="GO:0160240">
    <property type="term" value="P:RNA polymerase II transcription initiation surveillance"/>
    <property type="evidence" value="ECO:0000250"/>
    <property type="project" value="UniProtKB"/>
</dbReference>
<dbReference type="GO" id="GO:0031146">
    <property type="term" value="P:SCF-dependent proteasomal ubiquitin-dependent protein catabolic process"/>
    <property type="evidence" value="ECO:0000250"/>
    <property type="project" value="UniProtKB"/>
</dbReference>
<dbReference type="CDD" id="cd16485">
    <property type="entry name" value="mRING-H2-C3H2C2D_RBX1"/>
    <property type="match status" value="1"/>
</dbReference>
<dbReference type="FunFam" id="3.30.40.10:FF:000010">
    <property type="entry name" value="E3 ubiquitin-protein ligase RBX1"/>
    <property type="match status" value="1"/>
</dbReference>
<dbReference type="Gene3D" id="3.30.40.10">
    <property type="entry name" value="Zinc/RING finger domain, C3HC4 (zinc finger)"/>
    <property type="match status" value="1"/>
</dbReference>
<dbReference type="InterPro" id="IPR051031">
    <property type="entry name" value="RING-box_E3_Ubiquitin_Ligase"/>
</dbReference>
<dbReference type="InterPro" id="IPR001841">
    <property type="entry name" value="Znf_RING"/>
</dbReference>
<dbReference type="InterPro" id="IPR013083">
    <property type="entry name" value="Znf_RING/FYVE/PHD"/>
</dbReference>
<dbReference type="InterPro" id="IPR024766">
    <property type="entry name" value="Znf_RING_H2"/>
</dbReference>
<dbReference type="PANTHER" id="PTHR11210">
    <property type="entry name" value="RING BOX"/>
    <property type="match status" value="1"/>
</dbReference>
<dbReference type="Pfam" id="PF12678">
    <property type="entry name" value="zf-rbx1"/>
    <property type="match status" value="1"/>
</dbReference>
<dbReference type="SUPFAM" id="SSF57850">
    <property type="entry name" value="RING/U-box"/>
    <property type="match status" value="1"/>
</dbReference>
<dbReference type="PROSITE" id="PS50089">
    <property type="entry name" value="ZF_RING_2"/>
    <property type="match status" value="1"/>
</dbReference>
<sequence length="108" mass="12318">MAAAMDVDTPSATNSGASKKRFEVKKWNAVALWAWDIVVDNCAICRNHIMDLCIECQANQASATSEECTVAWGVCNHAFHFHCISRWLKTRQVCPLDNREWEFQKYGH</sequence>
<protein>
    <recommendedName>
        <fullName>E3 ubiquitin-protein ligase RBX1</fullName>
        <ecNumber evidence="1">2.3.2.27</ecNumber>
        <ecNumber evidence="1">2.3.2.32</ecNumber>
    </recommendedName>
    <alternativeName>
        <fullName>Hyperosmotic protein 21</fullName>
        <shortName>sHOP21</shortName>
    </alternativeName>
    <alternativeName>
        <fullName>RING-box protein 1</fullName>
        <shortName>Rbx1</shortName>
    </alternativeName>
</protein>
<feature type="chain" id="PRO_0000056015" description="E3 ubiquitin-protein ligase RBX1">
    <location>
        <begin position="1"/>
        <end position="108"/>
    </location>
</feature>
<feature type="zinc finger region" description="RING-type" evidence="3">
    <location>
        <begin position="53"/>
        <end position="98"/>
    </location>
</feature>
<feature type="binding site" evidence="2">
    <location>
        <position position="42"/>
    </location>
    <ligand>
        <name>Zn(2+)</name>
        <dbReference type="ChEBI" id="CHEBI:29105"/>
        <label>1</label>
    </ligand>
</feature>
<feature type="binding site" evidence="2">
    <location>
        <position position="45"/>
    </location>
    <ligand>
        <name>Zn(2+)</name>
        <dbReference type="ChEBI" id="CHEBI:29105"/>
        <label>1</label>
    </ligand>
</feature>
<feature type="binding site" evidence="2">
    <location>
        <position position="53"/>
    </location>
    <ligand>
        <name>Zn(2+)</name>
        <dbReference type="ChEBI" id="CHEBI:29105"/>
        <label>2</label>
    </ligand>
</feature>
<feature type="binding site" evidence="2">
    <location>
        <position position="56"/>
    </location>
    <ligand>
        <name>Zn(2+)</name>
        <dbReference type="ChEBI" id="CHEBI:29105"/>
        <label>2</label>
    </ligand>
</feature>
<feature type="binding site" evidence="2">
    <location>
        <position position="68"/>
    </location>
    <ligand>
        <name>Zn(2+)</name>
        <dbReference type="ChEBI" id="CHEBI:29105"/>
        <label>2</label>
    </ligand>
</feature>
<feature type="binding site" evidence="2">
    <location>
        <position position="75"/>
    </location>
    <ligand>
        <name>Zn(2+)</name>
        <dbReference type="ChEBI" id="CHEBI:29105"/>
        <label>3</label>
    </ligand>
</feature>
<feature type="binding site" evidence="2">
    <location>
        <position position="77"/>
    </location>
    <ligand>
        <name>Zn(2+)</name>
        <dbReference type="ChEBI" id="CHEBI:29105"/>
        <label>3</label>
    </ligand>
</feature>
<feature type="binding site" evidence="2">
    <location>
        <position position="80"/>
    </location>
    <ligand>
        <name>Zn(2+)</name>
        <dbReference type="ChEBI" id="CHEBI:29105"/>
        <label>1</label>
    </ligand>
</feature>
<feature type="binding site" evidence="2">
    <location>
        <position position="82"/>
    </location>
    <ligand>
        <name>Zn(2+)</name>
        <dbReference type="ChEBI" id="CHEBI:29105"/>
        <label>2</label>
    </ligand>
</feature>
<feature type="binding site" evidence="2">
    <location>
        <position position="94"/>
    </location>
    <ligand>
        <name>Zn(2+)</name>
        <dbReference type="ChEBI" id="CHEBI:29105"/>
        <label>3</label>
    </ligand>
</feature>
<feature type="binding site" evidence="2">
    <location>
        <position position="97"/>
    </location>
    <ligand>
        <name>Zn(2+)</name>
        <dbReference type="ChEBI" id="CHEBI:29105"/>
        <label>3</label>
    </ligand>
</feature>
<name>RBX1_SALSA</name>
<gene>
    <name type="primary">rbx1</name>
    <name type="synonym">hop21</name>
</gene>
<comment type="function">
    <text evidence="1">E3 ubiquitin ligase component of multiple cullin-RING-based E3 ubiquitin-protein ligase (CRLs) complexes which mediate the ubiquitination and subsequent proteasomal degradation of target proteins, including proteins involved in cell cycle progression, signal transduction, transcription and transcription-coupled nucleotide excision repair. CRLs complexes and ARIH1 collaborate in tandem to mediate ubiquitination of target proteins, ARIH1 mediating addition of the first ubiquitin on CRLs targets. The functional specificity of the E3 ubiquitin-protein ligase complexes depends on the variable substrate recognition components. Promotes the neddylation of CUL1, CUL2, CUL4 and CUL4 via its interaction with UBE2M.</text>
</comment>
<comment type="catalytic activity">
    <reaction evidence="1">
        <text>S-ubiquitinyl-[E2 ubiquitin-conjugating enzyme]-L-cysteine + [acceptor protein]-L-lysine = [E2 ubiquitin-conjugating enzyme]-L-cysteine + N(6)-ubiquitinyl-[acceptor protein]-L-lysine.</text>
        <dbReference type="EC" id="2.3.2.27"/>
    </reaction>
</comment>
<comment type="catalytic activity">
    <reaction evidence="1">
        <text>S-[NEDD8-protein]-yl-[E2 NEDD8-conjugating enzyme]-L-cysteine + [cullin]-L-lysine = [E2 NEDD8-conjugating enzyme]-L-cysteine + N(6)-[NEDD8-protein]-yl-[cullin]-L-lysine.</text>
        <dbReference type="EC" id="2.3.2.32"/>
    </reaction>
</comment>
<comment type="pathway">
    <text evidence="1">Protein modification; protein ubiquitination.</text>
</comment>
<comment type="pathway">
    <text evidence="1">Protein modification; protein neddylation.</text>
</comment>
<comment type="subunit">
    <text evidence="1">Part of SCF complexes, which consist of skp1, cul1, rbx1 and a F-box protein. Interacts with ube2m (By similarity).</text>
</comment>
<comment type="subcellular location">
    <subcellularLocation>
        <location evidence="1">Cytoplasm</location>
    </subcellularLocation>
    <subcellularLocation>
        <location evidence="1">Nucleus</location>
    </subcellularLocation>
</comment>
<comment type="tissue specificity">
    <text evidence="4">Expressed in heart and kidney.</text>
</comment>
<comment type="induction">
    <text evidence="4">During hyperosmotic stress and thermal stress.</text>
</comment>
<comment type="domain">
    <text evidence="1">The RING-type zinc finger domain is essential for ubiquitin ligase activity. It coordinates an additional third zinc ion.</text>
</comment>
<comment type="similarity">
    <text evidence="5">Belongs to the RING-box family.</text>
</comment>
<comment type="sequence caution" evidence="5">
    <conflict type="erroneous initiation">
        <sequence resource="EMBL-CDS" id="AAK29182"/>
    </conflict>
</comment>
<accession>Q8QG64</accession>
<organism>
    <name type="scientific">Salmo salar</name>
    <name type="common">Atlantic salmon</name>
    <dbReference type="NCBI Taxonomy" id="8030"/>
    <lineage>
        <taxon>Eukaryota</taxon>
        <taxon>Metazoa</taxon>
        <taxon>Chordata</taxon>
        <taxon>Craniata</taxon>
        <taxon>Vertebrata</taxon>
        <taxon>Euteleostomi</taxon>
        <taxon>Actinopterygii</taxon>
        <taxon>Neopterygii</taxon>
        <taxon>Teleostei</taxon>
        <taxon>Protacanthopterygii</taxon>
        <taxon>Salmoniformes</taxon>
        <taxon>Salmonidae</taxon>
        <taxon>Salmoninae</taxon>
        <taxon>Salmo</taxon>
    </lineage>
</organism>
<reference key="1">
    <citation type="journal article" date="2002" name="Am. J. Physiol.">
        <title>A homolog of the E3 ubiquitin ligase Rbx1 is induced during hyperosmotic stress of salmon.</title>
        <authorList>
            <person name="Pan F."/>
            <person name="Zarate J."/>
            <person name="Bradley T.M."/>
        </authorList>
    </citation>
    <scope>NUCLEOTIDE SEQUENCE [MRNA]</scope>
    <scope>TISSUE SPECIFICITY</scope>
    <scope>INDUCTION</scope>
    <source>
        <tissue>Gill</tissue>
    </source>
</reference>
<keyword id="KW-0963">Cytoplasm</keyword>
<keyword id="KW-0479">Metal-binding</keyword>
<keyword id="KW-0539">Nucleus</keyword>
<keyword id="KW-1185">Reference proteome</keyword>
<keyword id="KW-0346">Stress response</keyword>
<keyword id="KW-0808">Transferase</keyword>
<keyword id="KW-0833">Ubl conjugation pathway</keyword>
<keyword id="KW-0862">Zinc</keyword>
<keyword id="KW-0863">Zinc-finger</keyword>
<evidence type="ECO:0000250" key="1">
    <source>
        <dbReference type="UniProtKB" id="P62877"/>
    </source>
</evidence>
<evidence type="ECO:0000250" key="2">
    <source>
        <dbReference type="UniProtKB" id="P62878"/>
    </source>
</evidence>
<evidence type="ECO:0000255" key="3">
    <source>
        <dbReference type="PROSITE-ProRule" id="PRU00175"/>
    </source>
</evidence>
<evidence type="ECO:0000269" key="4">
    <source>
    </source>
</evidence>
<evidence type="ECO:0000305" key="5"/>